<evidence type="ECO:0000250" key="1">
    <source>
        <dbReference type="UniProtKB" id="Q9VUU5"/>
    </source>
</evidence>
<evidence type="ECO:0000250" key="2">
    <source>
        <dbReference type="UniProtKB" id="Q9Y2M5"/>
    </source>
</evidence>
<evidence type="ECO:0000255" key="3"/>
<evidence type="ECO:0000255" key="4">
    <source>
        <dbReference type="PROSITE-ProRule" id="PRU00037"/>
    </source>
</evidence>
<evidence type="ECO:0000256" key="5">
    <source>
        <dbReference type="SAM" id="MobiDB-lite"/>
    </source>
</evidence>
<evidence type="ECO:0000305" key="6"/>
<evidence type="ECO:0000312" key="7">
    <source>
        <dbReference type="EMBL" id="EDS36134.1"/>
    </source>
</evidence>
<organism>
    <name type="scientific">Culex quinquefasciatus</name>
    <name type="common">Southern house mosquito</name>
    <name type="synonym">Culex pungens</name>
    <dbReference type="NCBI Taxonomy" id="7176"/>
    <lineage>
        <taxon>Eukaryota</taxon>
        <taxon>Metazoa</taxon>
        <taxon>Ecdysozoa</taxon>
        <taxon>Arthropoda</taxon>
        <taxon>Hexapoda</taxon>
        <taxon>Insecta</taxon>
        <taxon>Pterygota</taxon>
        <taxon>Neoptera</taxon>
        <taxon>Endopterygota</taxon>
        <taxon>Diptera</taxon>
        <taxon>Nematocera</taxon>
        <taxon>Culicoidea</taxon>
        <taxon>Culicidae</taxon>
        <taxon>Culicinae</taxon>
        <taxon>Culicini</taxon>
        <taxon>Culex</taxon>
        <taxon>Culex</taxon>
    </lineage>
</organism>
<proteinExistence type="inferred from homology"/>
<name>KLHDB_CULQU</name>
<feature type="chain" id="PRO_0000379944" description="Kelch-like protein diablo">
    <location>
        <begin position="1"/>
        <end position="582"/>
    </location>
</feature>
<feature type="domain" description="BTB" evidence="4">
    <location>
        <begin position="41"/>
        <end position="108"/>
    </location>
</feature>
<feature type="domain" description="BACK" evidence="3">
    <location>
        <begin position="143"/>
        <end position="245"/>
    </location>
</feature>
<feature type="repeat" description="Kelch 1" evidence="3">
    <location>
        <begin position="292"/>
        <end position="338"/>
    </location>
</feature>
<feature type="repeat" description="Kelch 2" evidence="3">
    <location>
        <begin position="340"/>
        <end position="386"/>
    </location>
</feature>
<feature type="repeat" description="Kelch 3" evidence="3">
    <location>
        <begin position="387"/>
        <end position="433"/>
    </location>
</feature>
<feature type="repeat" description="Kelch 4" evidence="3">
    <location>
        <begin position="435"/>
        <end position="480"/>
    </location>
</feature>
<feature type="repeat" description="Kelch 5" evidence="3">
    <location>
        <begin position="482"/>
        <end position="527"/>
    </location>
</feature>
<feature type="repeat" description="Kelch 6" evidence="3">
    <location>
        <begin position="528"/>
        <end position="574"/>
    </location>
</feature>
<feature type="region of interest" description="Disordered" evidence="5">
    <location>
        <begin position="1"/>
        <end position="22"/>
    </location>
</feature>
<gene>
    <name evidence="1" type="primary">dbo</name>
    <name type="ORF">CPIJ011612</name>
</gene>
<accession>B0WWP2</accession>
<reference evidence="7" key="1">
    <citation type="submission" date="2007-03" db="EMBL/GenBank/DDBJ databases">
        <title>Annotation of Culex pipiens quinquefasciatus.</title>
        <authorList>
            <consortium name="The Broad Institute Genome Sequencing Platform"/>
            <person name="Atkinson P.W."/>
            <person name="Hemingway J."/>
            <person name="Christensen B.M."/>
            <person name="Higgs S."/>
            <person name="Kodira C.D."/>
            <person name="Hannick L.I."/>
            <person name="Megy K."/>
            <person name="O'Leary S.B."/>
            <person name="Pearson M."/>
            <person name="Haas B.J."/>
            <person name="Mauceli E."/>
            <person name="Wortman J.R."/>
            <person name="Lee N.H."/>
            <person name="Guigo R."/>
            <person name="Stanke M."/>
            <person name="Alvarado L."/>
            <person name="Amedeo P."/>
            <person name="Antoine C.H."/>
            <person name="Arensburger P."/>
            <person name="Bidwell S.L."/>
            <person name="Crawford M."/>
            <person name="Camaro F."/>
            <person name="Devon K."/>
            <person name="Engels R."/>
            <person name="Hammond M."/>
            <person name="Howarth C."/>
            <person name="Koehrsen M."/>
            <person name="Lawson D."/>
            <person name="Montgomery P."/>
            <person name="Nene V."/>
            <person name="Nusbaum C."/>
            <person name="Puiu D."/>
            <person name="Romero-Severson J."/>
            <person name="Severson D.W."/>
            <person name="Shumway M."/>
            <person name="Sisk P."/>
            <person name="Stolte C."/>
            <person name="Zeng Q."/>
            <person name="Eisenstadt E."/>
            <person name="Fraser-Liggett C.M."/>
            <person name="Strausberg R."/>
            <person name="Galagan J."/>
            <person name="Birren B."/>
            <person name="Collins F.H."/>
        </authorList>
    </citation>
    <scope>NUCLEOTIDE SEQUENCE [LARGE SCALE GENOMIC DNA]</scope>
    <source>
        <strain evidence="7">JHB</strain>
    </source>
</reference>
<comment type="function">
    <text evidence="1 2">Probable substrate-specific adapter of an E3 ubiquitin-protein ligase complex which mediates the ubiquitination and subsequent proteasomal degradation of target proteins. May have a role in synapse differentiation and growth (By similarity).</text>
</comment>
<comment type="pathway">
    <text evidence="2">Protein modification; protein ubiquitination.</text>
</comment>
<comment type="sequence caution" evidence="6">
    <conflict type="erroneous gene model prediction">
        <sequence resource="EMBL-CDS" id="EDS36134"/>
    </conflict>
</comment>
<dbReference type="EMBL" id="DS232150">
    <property type="protein sequence ID" value="EDS36134.1"/>
    <property type="status" value="ALT_SEQ"/>
    <property type="molecule type" value="Genomic_DNA"/>
</dbReference>
<dbReference type="RefSeq" id="XP_001861814.1">
    <property type="nucleotide sequence ID" value="XM_001861779.1"/>
</dbReference>
<dbReference type="SMR" id="B0WWP2"/>
<dbReference type="FunCoup" id="B0WWP2">
    <property type="interactions" value="1777"/>
</dbReference>
<dbReference type="STRING" id="7176.B0WWP2"/>
<dbReference type="EnsemblMetazoa" id="CQUJHB003481.R5333">
    <property type="protein sequence ID" value="CQUJHB003481.P5333"/>
    <property type="gene ID" value="CQUJHB003481"/>
</dbReference>
<dbReference type="EnsemblMetazoa" id="XM_038253265.1">
    <property type="protein sequence ID" value="XP_038109193.1"/>
    <property type="gene ID" value="LOC6044283"/>
</dbReference>
<dbReference type="KEGG" id="cqu:CpipJ_CPIJ011612"/>
<dbReference type="VEuPathDB" id="VectorBase:CPIJ011612"/>
<dbReference type="VEuPathDB" id="VectorBase:CPIJ011613"/>
<dbReference type="VEuPathDB" id="VectorBase:CQUJHB003481"/>
<dbReference type="eggNOG" id="KOG4441">
    <property type="taxonomic scope" value="Eukaryota"/>
</dbReference>
<dbReference type="HOGENOM" id="CLU_004253_14_2_1"/>
<dbReference type="InParanoid" id="B0WWP2"/>
<dbReference type="OrthoDB" id="45365at2759"/>
<dbReference type="UniPathway" id="UPA00143"/>
<dbReference type="Proteomes" id="UP000002320">
    <property type="component" value="Unassembled WGS sequence"/>
</dbReference>
<dbReference type="GO" id="GO:0003779">
    <property type="term" value="F:actin binding"/>
    <property type="evidence" value="ECO:0007669"/>
    <property type="project" value="UniProtKB-KW"/>
</dbReference>
<dbReference type="GO" id="GO:0045886">
    <property type="term" value="P:negative regulation of synaptic assembly at neuromuscular junction"/>
    <property type="evidence" value="ECO:0000250"/>
    <property type="project" value="UniProtKB"/>
</dbReference>
<dbReference type="GO" id="GO:0016567">
    <property type="term" value="P:protein ubiquitination"/>
    <property type="evidence" value="ECO:0007669"/>
    <property type="project" value="UniProtKB-UniPathway"/>
</dbReference>
<dbReference type="CDD" id="cd18459">
    <property type="entry name" value="BACK_KLHL20"/>
    <property type="match status" value="1"/>
</dbReference>
<dbReference type="CDD" id="cd18249">
    <property type="entry name" value="BTB_POZ_KLHL20_KLEIP"/>
    <property type="match status" value="1"/>
</dbReference>
<dbReference type="FunFam" id="1.25.40.420:FF:000001">
    <property type="entry name" value="Kelch-like family member 12"/>
    <property type="match status" value="1"/>
</dbReference>
<dbReference type="FunFam" id="2.120.10.80:FF:000006">
    <property type="entry name" value="Kelch-like family member 20"/>
    <property type="match status" value="1"/>
</dbReference>
<dbReference type="FunFam" id="3.30.710.10:FF:000001">
    <property type="entry name" value="Kelch-like family member 20"/>
    <property type="match status" value="1"/>
</dbReference>
<dbReference type="Gene3D" id="1.25.40.420">
    <property type="match status" value="1"/>
</dbReference>
<dbReference type="Gene3D" id="2.120.10.80">
    <property type="entry name" value="Kelch-type beta propeller"/>
    <property type="match status" value="1"/>
</dbReference>
<dbReference type="Gene3D" id="3.30.710.10">
    <property type="entry name" value="Potassium Channel Kv1.1, Chain A"/>
    <property type="match status" value="1"/>
</dbReference>
<dbReference type="InterPro" id="IPR011705">
    <property type="entry name" value="BACK"/>
</dbReference>
<dbReference type="InterPro" id="IPR017096">
    <property type="entry name" value="BTB-kelch_protein"/>
</dbReference>
<dbReference type="InterPro" id="IPR000210">
    <property type="entry name" value="BTB/POZ_dom"/>
</dbReference>
<dbReference type="InterPro" id="IPR011043">
    <property type="entry name" value="Gal_Oxase/kelch_b-propeller"/>
</dbReference>
<dbReference type="InterPro" id="IPR015915">
    <property type="entry name" value="Kelch-typ_b-propeller"/>
</dbReference>
<dbReference type="InterPro" id="IPR006652">
    <property type="entry name" value="Kelch_1"/>
</dbReference>
<dbReference type="InterPro" id="IPR011333">
    <property type="entry name" value="SKP1/BTB/POZ_sf"/>
</dbReference>
<dbReference type="PANTHER" id="PTHR24412">
    <property type="entry name" value="KELCH PROTEIN"/>
    <property type="match status" value="1"/>
</dbReference>
<dbReference type="PANTHER" id="PTHR24412:SF451">
    <property type="entry name" value="KELCH-LIKE PROTEIN 20"/>
    <property type="match status" value="1"/>
</dbReference>
<dbReference type="Pfam" id="PF07707">
    <property type="entry name" value="BACK"/>
    <property type="match status" value="1"/>
</dbReference>
<dbReference type="Pfam" id="PF00651">
    <property type="entry name" value="BTB"/>
    <property type="match status" value="1"/>
</dbReference>
<dbReference type="Pfam" id="PF01344">
    <property type="entry name" value="Kelch_1"/>
    <property type="match status" value="6"/>
</dbReference>
<dbReference type="PIRSF" id="PIRSF037037">
    <property type="entry name" value="Kelch-like_protein_gigaxonin"/>
    <property type="match status" value="1"/>
</dbReference>
<dbReference type="SMART" id="SM00875">
    <property type="entry name" value="BACK"/>
    <property type="match status" value="1"/>
</dbReference>
<dbReference type="SMART" id="SM00225">
    <property type="entry name" value="BTB"/>
    <property type="match status" value="1"/>
</dbReference>
<dbReference type="SMART" id="SM00612">
    <property type="entry name" value="Kelch"/>
    <property type="match status" value="6"/>
</dbReference>
<dbReference type="SUPFAM" id="SSF50965">
    <property type="entry name" value="Galactose oxidase, central domain"/>
    <property type="match status" value="1"/>
</dbReference>
<dbReference type="SUPFAM" id="SSF117281">
    <property type="entry name" value="Kelch motif"/>
    <property type="match status" value="1"/>
</dbReference>
<dbReference type="SUPFAM" id="SSF54695">
    <property type="entry name" value="POZ domain"/>
    <property type="match status" value="1"/>
</dbReference>
<dbReference type="PROSITE" id="PS50097">
    <property type="entry name" value="BTB"/>
    <property type="match status" value="1"/>
</dbReference>
<keyword id="KW-0009">Actin-binding</keyword>
<keyword id="KW-0880">Kelch repeat</keyword>
<keyword id="KW-1185">Reference proteome</keyword>
<keyword id="KW-0677">Repeat</keyword>
<keyword id="KW-0833">Ubl conjugation pathway</keyword>
<sequence>MGDVLISDRPPSPARLSHTSEKHPRVTLTELNVLRRHRELCDVVINVSGRKIFAHRVILSACSPYFRAMFTGELEESRQTEVTIRDIDENAMELLIDFCYTSHIVVEESNVQTLLPAACLLQLAEIQDICCEFLKRQLDPTNCLGIRAFADTHSCRELLRIADKFTQHNFQEVMESEEFLLLPVGQLVDIICSDELNVRSEEQVFNAVMAWLKYNVAERRQHLAQVLQHVRMPLLSPKFLVGTVGSDLLVRSDEACRDLVDEAKNYLLLPQERPLMQGPRTRPRKPTRRGEVLFAVGGWCSGDAIASVERFDPETADWKMVAPMSKRRCGVGVAVLNDLLYAVGGHDGQSYLNSIERYDPQTNQWSCDVAPTTSCRTSVGVAVLDGFLYAVGGQDGVQCLNHVERYDPKENKWSKVAPMTTRRLGVAVAVLGGYLYAIGGSDGQCPLNTVERYDPRQNKWCAVSPMSTRRKHLGCAVFNNFIYAVGGRDDCMELSSAERYNPHTNSWSPIVAMTSRRSGVGLAVVNGQLYAVGGFDGTAYLKTIEVYDPETNQWRLCGCMNYRRLGGGVGVMRAPQTENYMW</sequence>
<protein>
    <recommendedName>
        <fullName evidence="1">Kelch-like protein diablo</fullName>
    </recommendedName>
</protein>